<gene>
    <name type="ordered locus">Bamb_4889</name>
</gene>
<reference key="1">
    <citation type="submission" date="2006-08" db="EMBL/GenBank/DDBJ databases">
        <title>Complete sequence of chromosome 2 of Burkholderia cepacia AMMD.</title>
        <authorList>
            <person name="Copeland A."/>
            <person name="Lucas S."/>
            <person name="Lapidus A."/>
            <person name="Barry K."/>
            <person name="Detter J.C."/>
            <person name="Glavina del Rio T."/>
            <person name="Hammon N."/>
            <person name="Israni S."/>
            <person name="Pitluck S."/>
            <person name="Bruce D."/>
            <person name="Chain P."/>
            <person name="Malfatti S."/>
            <person name="Shin M."/>
            <person name="Vergez L."/>
            <person name="Schmutz J."/>
            <person name="Larimer F."/>
            <person name="Land M."/>
            <person name="Hauser L."/>
            <person name="Kyrpides N."/>
            <person name="Kim E."/>
            <person name="Parke J."/>
            <person name="Coenye T."/>
            <person name="Konstantinidis K."/>
            <person name="Ramette A."/>
            <person name="Tiedje J."/>
            <person name="Richardson P."/>
        </authorList>
    </citation>
    <scope>NUCLEOTIDE SEQUENCE [LARGE SCALE GENOMIC DNA]</scope>
    <source>
        <strain>ATCC BAA-244 / DSM 16087 / CCUG 44356 / LMG 19182 / AMMD</strain>
    </source>
</reference>
<proteinExistence type="inferred from homology"/>
<organism>
    <name type="scientific">Burkholderia ambifaria (strain ATCC BAA-244 / DSM 16087 / CCUG 44356 / LMG 19182 / AMMD)</name>
    <name type="common">Burkholderia cepacia (strain AMMD)</name>
    <dbReference type="NCBI Taxonomy" id="339670"/>
    <lineage>
        <taxon>Bacteria</taxon>
        <taxon>Pseudomonadati</taxon>
        <taxon>Pseudomonadota</taxon>
        <taxon>Betaproteobacteria</taxon>
        <taxon>Burkholderiales</taxon>
        <taxon>Burkholderiaceae</taxon>
        <taxon>Burkholderia</taxon>
        <taxon>Burkholderia cepacia complex</taxon>
    </lineage>
</organism>
<name>Y4889_BURCM</name>
<accession>Q0B5Y5</accession>
<dbReference type="EMBL" id="CP000441">
    <property type="protein sequence ID" value="ABI90438.1"/>
    <property type="molecule type" value="Genomic_DNA"/>
</dbReference>
<dbReference type="RefSeq" id="WP_011659829.1">
    <property type="nucleotide sequence ID" value="NC_008391.1"/>
</dbReference>
<dbReference type="SMR" id="Q0B5Y5"/>
<dbReference type="GeneID" id="93087838"/>
<dbReference type="KEGG" id="bam:Bamb_4889"/>
<dbReference type="PATRIC" id="fig|339670.21.peg.5259"/>
<dbReference type="eggNOG" id="COG3132">
    <property type="taxonomic scope" value="Bacteria"/>
</dbReference>
<dbReference type="Proteomes" id="UP000000662">
    <property type="component" value="Chromosome 2"/>
</dbReference>
<dbReference type="Gene3D" id="1.10.10.10">
    <property type="entry name" value="Winged helix-like DNA-binding domain superfamily/Winged helix DNA-binding domain"/>
    <property type="match status" value="2"/>
</dbReference>
<dbReference type="HAMAP" id="MF_01584">
    <property type="entry name" value="UPF0502"/>
    <property type="match status" value="1"/>
</dbReference>
<dbReference type="InterPro" id="IPR007432">
    <property type="entry name" value="DUF480"/>
</dbReference>
<dbReference type="InterPro" id="IPR036388">
    <property type="entry name" value="WH-like_DNA-bd_sf"/>
</dbReference>
<dbReference type="InterPro" id="IPR036390">
    <property type="entry name" value="WH_DNA-bd_sf"/>
</dbReference>
<dbReference type="PANTHER" id="PTHR38768">
    <property type="entry name" value="UPF0502 PROTEIN YCEH"/>
    <property type="match status" value="1"/>
</dbReference>
<dbReference type="PANTHER" id="PTHR38768:SF1">
    <property type="entry name" value="UPF0502 PROTEIN YCEH"/>
    <property type="match status" value="1"/>
</dbReference>
<dbReference type="Pfam" id="PF04337">
    <property type="entry name" value="DUF480"/>
    <property type="match status" value="1"/>
</dbReference>
<dbReference type="SUPFAM" id="SSF46785">
    <property type="entry name" value="Winged helix' DNA-binding domain"/>
    <property type="match status" value="2"/>
</dbReference>
<sequence length="236" mass="25428">MNTTPDMPTPRALRELTPLEARILGVLVEKQHTVPDTYPLSLNALTAGCNQKTARSPVMNVSEDEVTTAIDSLKHLSLVMEGSSSRVPRFEHNMNRVLGIPSQAIALLTILLLRGPQTAAELRLNSARLHGFADISSVEAFLDELAARAQPLVIRLPRAAGARENRWLHLMCGEVNVADFVGPDTGGGTDSVPPSEFEALKAEQKRLADEVARLNALVQRMATELGIDVDAPGDAG</sequence>
<protein>
    <recommendedName>
        <fullName evidence="1">UPF0502 protein Bamb_4889</fullName>
    </recommendedName>
</protein>
<evidence type="ECO:0000255" key="1">
    <source>
        <dbReference type="HAMAP-Rule" id="MF_01584"/>
    </source>
</evidence>
<feature type="chain" id="PRO_0000309374" description="UPF0502 protein Bamb_4889">
    <location>
        <begin position="1"/>
        <end position="236"/>
    </location>
</feature>
<comment type="similarity">
    <text evidence="1">Belongs to the UPF0502 family.</text>
</comment>